<comment type="function">
    <text evidence="2 5 6">May function in the control of the neuroendocrine secretory pathway. Proposed be a specific endogenous inhibitor of PCSK1 (PubMed:10632593, PubMed:10816562). ProSAAS and Big PEN-LEN, both containing the C-terminal inhibitory domain, but not the processed peptides reduce PCSK1 activity in the endoplasmic reticulum and Golgi. It reduces the activity of the 87 kDa form but not the autocatalytically derived 65 kDa form of PCSK1. Subsequent processing of proSAAS may eliminate the inhibition. Slows down convertase-mediated processing of proopiomelanocortin and proenkephalin. May control the intracellular timing of PCSK1 rather than its total level of activity (By similarity).</text>
</comment>
<comment type="function">
    <molecule>Big LEN</molecule>
    <text evidence="2">Endogenous ligand for GPR171. Neuropeptide involved in the regulation of feeding.</text>
</comment>
<comment type="function">
    <molecule>PEN</molecule>
    <text evidence="2">Endogenous ligand for GPR171. Neuropeptide involved in the regulation of feeding.</text>
</comment>
<comment type="subunit">
    <text evidence="6">Interacts via the C-terminal inhibitory domain with PCSK1 65 kDa form.</text>
</comment>
<comment type="subcellular location">
    <subcellularLocation>
        <location evidence="2">Secreted</location>
    </subcellularLocation>
    <subcellularLocation>
        <location evidence="2">Golgi apparatus</location>
        <location evidence="2">trans-Golgi network</location>
    </subcellularLocation>
</comment>
<comment type="tissue specificity">
    <text evidence="5 9">Expressed in adult brain (all major structural regions), adrenal gland (medulla) and spinal cord (dorsal and ventral horn). Expressed in pancreatic islands.</text>
</comment>
<comment type="developmental stage">
    <text evidence="8">Expressed by 12.5 dpc in essentially all differentiating neurons in the mantle layer of the myelencephalon, metencephalon, diencephalon, spinal cord and several sympathetic ganglia. During later stages of prenatal development, widespread expression continues in post-mitotic neurons of both the CNS and PNS and begins in endocrine cells of the anterior and intermediate pituitary.</text>
</comment>
<comment type="domain">
    <text evidence="1">ProSAAS(1-180) increases secretion of enzymatically inactive PCSK1.</text>
</comment>
<comment type="domain">
    <text>The C-terminal inhibitory domain is involved in inhibition of PCSK1. It corresponds to the probable processing intermediate Big PEN-LEN, binds to PCSK1 in vitro and contains the hexapeptide L-L-R-V-K-R, which, as a synthetic peptide, is sufficient for PCSK1 inhibition.</text>
</comment>
<comment type="domain">
    <molecule>Big LEN</molecule>
    <text evidence="2">The four C-terminal amino acids of Big LEN are sufficient to bind and activate GPR171.</text>
</comment>
<comment type="PTM">
    <text evidence="7">Proteolytically cleaved in the Golgi. Big SAAS, Little SAAS, PEN and Big LEN are the major processed peptides in proSAAS-overexpressing PC-12 phaeochromocytoma cells (lacking PCSK1 and PCSK2 endopeptidases). Peptides corresponding to PEN and a proSAAS aa 40-59 have been detected in wild-type PC-12 cells.</text>
</comment>
<organism>
    <name type="scientific">Rattus norvegicus</name>
    <name type="common">Rat</name>
    <dbReference type="NCBI Taxonomy" id="10116"/>
    <lineage>
        <taxon>Eukaryota</taxon>
        <taxon>Metazoa</taxon>
        <taxon>Chordata</taxon>
        <taxon>Craniata</taxon>
        <taxon>Vertebrata</taxon>
        <taxon>Euteleostomi</taxon>
        <taxon>Mammalia</taxon>
        <taxon>Eutheria</taxon>
        <taxon>Euarchontoglires</taxon>
        <taxon>Glires</taxon>
        <taxon>Rodentia</taxon>
        <taxon>Myomorpha</taxon>
        <taxon>Muroidea</taxon>
        <taxon>Muridae</taxon>
        <taxon>Murinae</taxon>
        <taxon>Rattus</taxon>
    </lineage>
</organism>
<reference key="1">
    <citation type="journal article" date="2000" name="J. Neurosci.">
        <title>Identification and characterization of proSAAS, a granin-like neuroendocrine peptide precursor that inhibits prohormone processing.</title>
        <authorList>
            <person name="Fricker L."/>
            <person name="McKinzie A.A."/>
            <person name="Sun J."/>
            <person name="Curran E."/>
            <person name="Qian Y."/>
            <person name="Yan L."/>
            <person name="Patterson S.D."/>
            <person name="Courchesne P.L."/>
            <person name="Richards B."/>
            <person name="Levin N."/>
            <person name="Mzhavia N."/>
            <person name="Devi L.A."/>
            <person name="Douglass J."/>
        </authorList>
    </citation>
    <scope>NUCLEOTIDE SEQUENCE [MRNA]</scope>
    <scope>FUNCTION</scope>
    <scope>TISSUE SPECIFICITY</scope>
</reference>
<reference key="2">
    <citation type="journal article" date="1998" name="Neuroendocrinology">
        <title>Molecular cloning and characterization of a highly basic protein, IA-4, expressed in pancreatic islets and brain.</title>
        <authorList>
            <person name="Donadel G."/>
            <person name="Marinos N."/>
            <person name="DeSilva M.G."/>
            <person name="Lu J."/>
            <person name="Notkins A.L."/>
            <person name="Lan M.S."/>
        </authorList>
    </citation>
    <scope>TISSUE SPECIFICITY</scope>
</reference>
<reference key="3">
    <citation type="journal article" date="2000" name="J. Biol. Chem.">
        <title>The C-terminal region of proSAAS is a potent inhibitor of prohormone convertase 1.</title>
        <authorList>
            <person name="Qian Y."/>
            <person name="Devi L.A."/>
            <person name="Mzhavia N."/>
            <person name="Munzer S."/>
            <person name="Seidah N.G."/>
            <person name="Fricker L.D."/>
        </authorList>
    </citation>
    <scope>FUNCTION</scope>
    <scope>INTERACTION WITH PCSK1</scope>
</reference>
<reference key="4">
    <citation type="journal article" date="2002" name="Biochem. J.">
        <title>Processing of proSAAS in neuroendocrine cell lines.</title>
        <authorList>
            <person name="Mzhavia N."/>
            <person name="Qian Y."/>
            <person name="Feng Y."/>
            <person name="Che F.-Y."/>
            <person name="Devi L.A."/>
            <person name="Fricker L.D."/>
        </authorList>
    </citation>
    <scope>PROTEOLYTIC PROCESSING (BIG SAAS; LITTLE SAAS; BIG PEN-LEN; PEN; PEN-20 AND BIG LEN)</scope>
</reference>
<reference key="5">
    <citation type="journal article" date="2005" name="J. Neurochem.">
        <title>Embryonic gene expression and pro-protein processing of proSAAS during rodent development.</title>
        <authorList>
            <person name="Morgan D.J."/>
            <person name="Mzhavia N."/>
            <person name="Peng B."/>
            <person name="Pan H."/>
            <person name="Devi L.A."/>
            <person name="Pintar J.E."/>
        </authorList>
    </citation>
    <scope>DEVELOPMENTAL STAGE</scope>
</reference>
<proteinExistence type="evidence at protein level"/>
<keyword id="KW-0165">Cleavage on pair of basic residues</keyword>
<keyword id="KW-0333">Golgi apparatus</keyword>
<keyword id="KW-0527">Neuropeptide</keyword>
<keyword id="KW-1185">Reference proteome</keyword>
<keyword id="KW-0964">Secreted</keyword>
<keyword id="KW-0732">Signal</keyword>
<feature type="signal peptide" evidence="3">
    <location>
        <begin position="1"/>
        <end position="33"/>
    </location>
</feature>
<feature type="chain" id="PRO_0000259691" description="ProSAAS">
    <location>
        <begin position="34"/>
        <end position="260"/>
    </location>
</feature>
<feature type="peptide" id="PRO_0000259693" description="Big SAAS">
    <location>
        <begin position="34"/>
        <end position="59"/>
    </location>
</feature>
<feature type="peptide" id="PRO_0000259692" description="KEP" evidence="1">
    <location>
        <begin position="34"/>
        <end position="40"/>
    </location>
</feature>
<feature type="peptide" id="PRO_0000259694" description="Little SAAS">
    <location>
        <begin position="42"/>
        <end position="59"/>
    </location>
</feature>
<feature type="peptide" id="PRO_0000259695" description="Big PEN-LEN" evidence="1">
    <location>
        <begin position="221"/>
        <end position="260"/>
    </location>
</feature>
<feature type="peptide" id="PRO_0000259696" description="PEN">
    <location>
        <begin position="221"/>
        <end position="242"/>
    </location>
</feature>
<feature type="peptide" id="PRO_0000259697" description="PEN-20">
    <location>
        <begin position="221"/>
        <end position="240"/>
    </location>
</feature>
<feature type="peptide" id="PRO_0000259698" description="Big LEN">
    <location>
        <begin position="245"/>
        <end position="260"/>
    </location>
</feature>
<feature type="peptide" id="PRO_0000259699" description="Little LEN" evidence="1">
    <location>
        <begin position="245"/>
        <end position="254"/>
    </location>
</feature>
<feature type="region of interest" description="ProSAAS(1-180)">
    <location>
        <begin position="34"/>
        <end position="215"/>
    </location>
</feature>
<feature type="region of interest" description="Disordered" evidence="4">
    <location>
        <begin position="162"/>
        <end position="187"/>
    </location>
</feature>
<feature type="region of interest" description="Disordered" evidence="4">
    <location>
        <begin position="206"/>
        <end position="234"/>
    </location>
</feature>
<feature type="region of interest" description="C-terminal inhibitory domain; interacts with PCSK1">
    <location>
        <begin position="221"/>
        <end position="260"/>
    </location>
</feature>
<feature type="short sequence motif" description="Sufficient for inhibition of PCSK1" evidence="1">
    <location>
        <begin position="239"/>
        <end position="244"/>
    </location>
</feature>
<accession>Q9QXU9</accession>
<gene>
    <name type="primary">Pcsk1n</name>
</gene>
<dbReference type="EMBL" id="AF181561">
    <property type="protein sequence ID" value="AAF22642.1"/>
    <property type="molecule type" value="mRNA"/>
</dbReference>
<dbReference type="RefSeq" id="NP_062152.1">
    <property type="nucleotide sequence ID" value="NM_019279.1"/>
</dbReference>
<dbReference type="SMR" id="Q9QXU9"/>
<dbReference type="BioGRID" id="251598">
    <property type="interactions" value="1"/>
</dbReference>
<dbReference type="FunCoup" id="Q9QXU9">
    <property type="interactions" value="117"/>
</dbReference>
<dbReference type="IntAct" id="Q9QXU9">
    <property type="interactions" value="1"/>
</dbReference>
<dbReference type="STRING" id="10116.ENSRNOP00000009794"/>
<dbReference type="MEROPS" id="I49.001"/>
<dbReference type="GlyGen" id="Q9QXU9">
    <property type="glycosylation" value="1 site"/>
</dbReference>
<dbReference type="iPTMnet" id="Q9QXU9"/>
<dbReference type="PhosphoSitePlus" id="Q9QXU9"/>
<dbReference type="jPOST" id="Q9QXU9"/>
<dbReference type="GeneID" id="246333"/>
<dbReference type="KEGG" id="rno:246333"/>
<dbReference type="UCSC" id="RGD:3617">
    <property type="organism name" value="rat"/>
</dbReference>
<dbReference type="AGR" id="RGD:3617"/>
<dbReference type="CTD" id="27344"/>
<dbReference type="RGD" id="3617">
    <property type="gene designation" value="Pcsk1n"/>
</dbReference>
<dbReference type="eggNOG" id="ENOG502RYS0">
    <property type="taxonomic scope" value="Eukaryota"/>
</dbReference>
<dbReference type="InParanoid" id="Q9QXU9"/>
<dbReference type="OrthoDB" id="8962476at2759"/>
<dbReference type="PhylomeDB" id="Q9QXU9"/>
<dbReference type="PRO" id="PR:Q9QXU9"/>
<dbReference type="Proteomes" id="UP000002494">
    <property type="component" value="Unplaced"/>
</dbReference>
<dbReference type="GO" id="GO:0005615">
    <property type="term" value="C:extracellular space"/>
    <property type="evidence" value="ECO:0000314"/>
    <property type="project" value="RGD"/>
</dbReference>
<dbReference type="GO" id="GO:0030141">
    <property type="term" value="C:secretory granule"/>
    <property type="evidence" value="ECO:0000266"/>
    <property type="project" value="RGD"/>
</dbReference>
<dbReference type="GO" id="GO:0005802">
    <property type="term" value="C:trans-Golgi network"/>
    <property type="evidence" value="ECO:0000266"/>
    <property type="project" value="RGD"/>
</dbReference>
<dbReference type="GO" id="GO:0004866">
    <property type="term" value="F:endopeptidase inhibitor activity"/>
    <property type="evidence" value="ECO:0000314"/>
    <property type="project" value="RGD"/>
</dbReference>
<dbReference type="GO" id="GO:0004867">
    <property type="term" value="F:serine-type endopeptidase inhibitor activity"/>
    <property type="evidence" value="ECO:0000266"/>
    <property type="project" value="RGD"/>
</dbReference>
<dbReference type="GO" id="GO:0007218">
    <property type="term" value="P:neuropeptide signaling pathway"/>
    <property type="evidence" value="ECO:0007669"/>
    <property type="project" value="UniProtKB-KW"/>
</dbReference>
<dbReference type="GO" id="GO:0016486">
    <property type="term" value="P:peptide hormone processing"/>
    <property type="evidence" value="ECO:0000266"/>
    <property type="project" value="RGD"/>
</dbReference>
<dbReference type="GO" id="GO:0009409">
    <property type="term" value="P:response to cold"/>
    <property type="evidence" value="ECO:0000266"/>
    <property type="project" value="RGD"/>
</dbReference>
<dbReference type="GO" id="GO:0002021">
    <property type="term" value="P:response to dietary excess"/>
    <property type="evidence" value="ECO:0000266"/>
    <property type="project" value="RGD"/>
</dbReference>
<dbReference type="InterPro" id="IPR010832">
    <property type="entry name" value="ProSAAS"/>
</dbReference>
<dbReference type="PANTHER" id="PTHR15531">
    <property type="entry name" value="PROSAAS"/>
    <property type="match status" value="1"/>
</dbReference>
<dbReference type="PANTHER" id="PTHR15531:SF0">
    <property type="entry name" value="PROSAAS"/>
    <property type="match status" value="1"/>
</dbReference>
<dbReference type="Pfam" id="PF07259">
    <property type="entry name" value="ProSAAS"/>
    <property type="match status" value="1"/>
</dbReference>
<evidence type="ECO:0000250" key="1"/>
<evidence type="ECO:0000250" key="2">
    <source>
        <dbReference type="UniProtKB" id="Q9QXV0"/>
    </source>
</evidence>
<evidence type="ECO:0000255" key="3"/>
<evidence type="ECO:0000256" key="4">
    <source>
        <dbReference type="SAM" id="MobiDB-lite"/>
    </source>
</evidence>
<evidence type="ECO:0000269" key="5">
    <source>
    </source>
</evidence>
<evidence type="ECO:0000269" key="6">
    <source>
    </source>
</evidence>
<evidence type="ECO:0000269" key="7">
    <source>
    </source>
</evidence>
<evidence type="ECO:0000269" key="8">
    <source>
    </source>
</evidence>
<evidence type="ECO:0000269" key="9">
    <source>
    </source>
</evidence>
<protein>
    <recommendedName>
        <fullName>ProSAAS</fullName>
    </recommendedName>
    <alternativeName>
        <fullName>Proprotein convertase subtilisin/kexin type 1 inhibitor</fullName>
        <shortName>Proprotein convertase 1 inhibitor</shortName>
    </alternativeName>
    <alternativeName>
        <fullName>pro-SAAS</fullName>
    </alternativeName>
    <component>
        <recommendedName>
            <fullName>KEP</fullName>
        </recommendedName>
    </component>
    <component>
        <recommendedName>
            <fullName>Big SAAS</fullName>
            <shortName>b-SAAS</shortName>
        </recommendedName>
    </component>
    <component>
        <recommendedName>
            <fullName>Little SAAS</fullName>
            <shortName>l-SAAS</shortName>
        </recommendedName>
    </component>
    <component>
        <recommendedName>
            <fullName>Big PEN-LEN</fullName>
            <shortName>b-PEN-LEN</shortName>
        </recommendedName>
        <alternativeName>
            <fullName>SAAS CT(1-49)</fullName>
        </alternativeName>
    </component>
    <component>
        <recommendedName>
            <fullName>PEN</fullName>
        </recommendedName>
    </component>
    <component>
        <recommendedName>
            <fullName>PEN-20</fullName>
        </recommendedName>
    </component>
    <component>
        <recommendedName>
            <fullName>Little LEN</fullName>
            <shortName>l-LEN</shortName>
        </recommendedName>
    </component>
    <component>
        <recommendedName>
            <fullName>Big LEN</fullName>
            <shortName>b-LEN</shortName>
        </recommendedName>
        <alternativeName>
            <fullName>SAAS CT(25-40)</fullName>
        </alternativeName>
    </component>
</protein>
<name>PCS1N_RAT</name>
<sequence length="260" mass="27414">MAGSPLLCGPRAGGVGLLVLLLLGLLRLPPTLSARPVKEPRSLSAASAPLAETSTPLRLRRAVPRGEAAGAVQELARALAHLLEAERQERARAEAQEAEDQQARVLAQLLRAWGSPRASDPPLAPDDDPDAPAAQLARALLRARLDPAALAAQLVPAPAPAAALRPRPPVYDDGPTGPDVEDAADETPDVDPELLRYLLGRILTGSSEPEAAPAPRRLRRAVDQDLGPEVPPENVLGALLRVKRLENSSPQAPARRLLPP</sequence>